<keyword id="KW-0130">Cell adhesion</keyword>
<keyword id="KW-1015">Disulfide bond</keyword>
<keyword id="KW-0325">Glycoprotein</keyword>
<keyword id="KW-1185">Reference proteome</keyword>
<keyword id="KW-0732">Signal</keyword>
<protein>
    <recommendedName>
        <fullName>A-agglutinin-binding subunit</fullName>
    </recommendedName>
</protein>
<organism>
    <name type="scientific">Saccharomyces cerevisiae (strain ATCC 204508 / S288c)</name>
    <name type="common">Baker's yeast</name>
    <dbReference type="NCBI Taxonomy" id="559292"/>
    <lineage>
        <taxon>Eukaryota</taxon>
        <taxon>Fungi</taxon>
        <taxon>Dikarya</taxon>
        <taxon>Ascomycota</taxon>
        <taxon>Saccharomycotina</taxon>
        <taxon>Saccharomycetes</taxon>
        <taxon>Saccharomycetales</taxon>
        <taxon>Saccharomycetaceae</taxon>
        <taxon>Saccharomyces</taxon>
    </lineage>
</organism>
<gene>
    <name type="primary">AGA2</name>
    <name type="ordered locus">YGL032C</name>
</gene>
<accession>P32781</accession>
<accession>D6VUA6</accession>
<comment type="function">
    <text evidence="3">Receptor binding subunit of the a-agglutinin heterodimer. S.cerevisiae a and alpha cells express the complementary cell surface glycoproteins a-agglutinin and alpha-agglutinin, respectively, which interact with one another to promote cellular aggregation during mating.</text>
</comment>
<comment type="subunit">
    <text evidence="1 4 5">Heterodimer; disulfide-linked (Probable). Interacts with SAG1.</text>
</comment>
<comment type="interaction">
    <interactant intactId="EBI-2347">
        <id>P32781</id>
    </interactant>
    <interactant intactId="EBI-2340">
        <id>P32323</id>
        <label>AGA1</label>
    </interactant>
    <organismsDiffer>false</organismsDiffer>
    <experiments>2</experiments>
</comment>
<comment type="miscellaneous">
    <text evidence="2">Present with 1160 molecules/cell in log phase SD medium.</text>
</comment>
<dbReference type="EMBL" id="X62877">
    <property type="protein sequence ID" value="CAA44670.1"/>
    <property type="molecule type" value="mRNA"/>
</dbReference>
<dbReference type="EMBL" id="Z72554">
    <property type="protein sequence ID" value="CAA96733.1"/>
    <property type="molecule type" value="Genomic_DNA"/>
</dbReference>
<dbReference type="EMBL" id="BK006941">
    <property type="protein sequence ID" value="DAA08067.1"/>
    <property type="molecule type" value="Genomic_DNA"/>
</dbReference>
<dbReference type="PIR" id="S18838">
    <property type="entry name" value="S18838"/>
</dbReference>
<dbReference type="RefSeq" id="NP_011483.3">
    <property type="nucleotide sequence ID" value="NM_001180897.3"/>
</dbReference>
<dbReference type="BioGRID" id="33214">
    <property type="interactions" value="52"/>
</dbReference>
<dbReference type="ComplexPortal" id="CPX-1838">
    <property type="entry name" value="a-agglutinin"/>
</dbReference>
<dbReference type="DIP" id="DIP-5451N"/>
<dbReference type="FunCoup" id="P32781">
    <property type="interactions" value="114"/>
</dbReference>
<dbReference type="IntAct" id="P32781">
    <property type="interactions" value="1"/>
</dbReference>
<dbReference type="STRING" id="4932.YGL032C"/>
<dbReference type="GlyCosmos" id="P32781">
    <property type="glycosylation" value="7 sites, No reported glycans"/>
</dbReference>
<dbReference type="GlyGen" id="P32781">
    <property type="glycosylation" value="7 sites"/>
</dbReference>
<dbReference type="PaxDb" id="4932-YGL032C"/>
<dbReference type="PeptideAtlas" id="P32781"/>
<dbReference type="EnsemblFungi" id="YGL032C_mRNA">
    <property type="protein sequence ID" value="YGL032C"/>
    <property type="gene ID" value="YGL032C"/>
</dbReference>
<dbReference type="GeneID" id="852851"/>
<dbReference type="KEGG" id="sce:YGL032C"/>
<dbReference type="AGR" id="SGD:S000003000"/>
<dbReference type="SGD" id="S000003000">
    <property type="gene designation" value="AGA2"/>
</dbReference>
<dbReference type="VEuPathDB" id="FungiDB:YGL032C"/>
<dbReference type="eggNOG" id="ENOG502SCZQ">
    <property type="taxonomic scope" value="Eukaryota"/>
</dbReference>
<dbReference type="HOGENOM" id="CLU_189322_0_0_1"/>
<dbReference type="InParanoid" id="P32781"/>
<dbReference type="OMA" id="MVAVIEY"/>
<dbReference type="OrthoDB" id="4069335at2759"/>
<dbReference type="BioCyc" id="YEAST:G3O-30548-MONOMER"/>
<dbReference type="BioGRID-ORCS" id="852851">
    <property type="hits" value="0 hits in 10 CRISPR screens"/>
</dbReference>
<dbReference type="PRO" id="PR:P32781"/>
<dbReference type="Proteomes" id="UP000002311">
    <property type="component" value="Chromosome VII"/>
</dbReference>
<dbReference type="RNAct" id="P32781">
    <property type="molecule type" value="protein"/>
</dbReference>
<dbReference type="GO" id="GO:0005783">
    <property type="term" value="C:endoplasmic reticulum"/>
    <property type="evidence" value="ECO:0007005"/>
    <property type="project" value="SGD"/>
</dbReference>
<dbReference type="GO" id="GO:0009277">
    <property type="term" value="C:fungal-type cell wall"/>
    <property type="evidence" value="ECO:0000314"/>
    <property type="project" value="SGD"/>
</dbReference>
<dbReference type="GO" id="GO:0000324">
    <property type="term" value="C:fungal-type vacuole"/>
    <property type="evidence" value="ECO:0007005"/>
    <property type="project" value="SGD"/>
</dbReference>
<dbReference type="GO" id="GO:0050839">
    <property type="term" value="F:cell adhesion molecule binding"/>
    <property type="evidence" value="ECO:0000314"/>
    <property type="project" value="SGD"/>
</dbReference>
<dbReference type="GO" id="GO:0000752">
    <property type="term" value="P:agglutination involved in conjugation with cellular fusion"/>
    <property type="evidence" value="ECO:0000314"/>
    <property type="project" value="ComplexPortal"/>
</dbReference>
<dbReference type="InterPro" id="IPR014404">
    <property type="entry name" value="Aga2"/>
</dbReference>
<dbReference type="Pfam" id="PF17366">
    <property type="entry name" value="AGA2"/>
    <property type="match status" value="1"/>
</dbReference>
<dbReference type="PIRSF" id="PIRSF002695">
    <property type="entry name" value="A-agglutinin"/>
    <property type="match status" value="1"/>
</dbReference>
<evidence type="ECO:0000269" key="1">
    <source>
    </source>
</evidence>
<evidence type="ECO:0000269" key="2">
    <source>
    </source>
</evidence>
<evidence type="ECO:0000269" key="3">
    <source>
    </source>
</evidence>
<evidence type="ECO:0000269" key="4">
    <source>
    </source>
</evidence>
<evidence type="ECO:0000305" key="5"/>
<feature type="signal peptide">
    <location>
        <begin position="1"/>
        <end position="18"/>
    </location>
</feature>
<feature type="chain" id="PRO_0000020642" description="A-agglutinin-binding subunit">
    <location>
        <begin position="19"/>
        <end position="87"/>
    </location>
</feature>
<feature type="glycosylation site" description="O-linked (Man...) threonine">
    <location>
        <position position="22"/>
    </location>
</feature>
<feature type="glycosylation site" description="O-linked (Man...) serine">
    <location>
        <position position="30"/>
    </location>
</feature>
<feature type="glycosylation site" description="O-linked (Man...) threonine">
    <location>
        <position position="32"/>
    </location>
</feature>
<feature type="glycosylation site" description="O-linked (Man...) serine">
    <location>
        <position position="39"/>
    </location>
</feature>
<feature type="glycosylation site" description="O-linked (Man...) threonine">
    <location>
        <position position="63"/>
    </location>
</feature>
<feature type="glycosylation site" description="O-linked (Man...) serine">
    <location>
        <position position="66"/>
    </location>
</feature>
<feature type="glycosylation site" description="O-linked (Man...) threonine">
    <location>
        <position position="75"/>
    </location>
</feature>
<feature type="disulfide bond" description="Interchain (with AGA1)" evidence="5">
    <location>
        <position position="25"/>
    </location>
</feature>
<feature type="disulfide bond" description="Interchain (with AGA1)" evidence="5">
    <location>
        <position position="68"/>
    </location>
</feature>
<feature type="mutagenesis site" description="Abolishes agglutination; when associated with S-68." evidence="4">
    <original>C</original>
    <variation>S</variation>
    <location>
        <position position="25"/>
    </location>
</feature>
<feature type="mutagenesis site" description="Abolishes agglutination; when associated with S-25." evidence="4">
    <original>C</original>
    <variation>S</variation>
    <location>
        <position position="68"/>
    </location>
</feature>
<name>AGA2_YEAST</name>
<reference key="1">
    <citation type="journal article" date="1991" name="EMBO J.">
        <title>Saccharomyces cerevisiae a- and alpha-agglutinin: characterization of their molecular interaction.</title>
        <authorList>
            <person name="Cappellaro C."/>
            <person name="Hauser K."/>
            <person name="Mrsa V."/>
            <person name="Watzele M."/>
            <person name="Watzele G."/>
            <person name="Gruber C."/>
            <person name="Tanner W."/>
        </authorList>
    </citation>
    <scope>NUCLEOTIDE SEQUENCE [MRNA]</scope>
    <scope>FUNCTION</scope>
    <source>
        <strain>ATCC 26786 / X2180-1A</strain>
    </source>
</reference>
<reference key="2">
    <citation type="journal article" date="1997" name="Nature">
        <title>The nucleotide sequence of Saccharomyces cerevisiae chromosome VII.</title>
        <authorList>
            <person name="Tettelin H."/>
            <person name="Agostoni-Carbone M.L."/>
            <person name="Albermann K."/>
            <person name="Albers M."/>
            <person name="Arroyo J."/>
            <person name="Backes U."/>
            <person name="Barreiros T."/>
            <person name="Bertani I."/>
            <person name="Bjourson A.J."/>
            <person name="Brueckner M."/>
            <person name="Bruschi C.V."/>
            <person name="Carignani G."/>
            <person name="Castagnoli L."/>
            <person name="Cerdan E."/>
            <person name="Clemente M.L."/>
            <person name="Coblenz A."/>
            <person name="Coglievina M."/>
            <person name="Coissac E."/>
            <person name="Defoor E."/>
            <person name="Del Bino S."/>
            <person name="Delius H."/>
            <person name="Delneri D."/>
            <person name="de Wergifosse P."/>
            <person name="Dujon B."/>
            <person name="Durand P."/>
            <person name="Entian K.-D."/>
            <person name="Eraso P."/>
            <person name="Escribano V."/>
            <person name="Fabiani L."/>
            <person name="Fartmann B."/>
            <person name="Feroli F."/>
            <person name="Feuermann M."/>
            <person name="Frontali L."/>
            <person name="Garcia-Gonzalez M."/>
            <person name="Garcia-Saez M.I."/>
            <person name="Goffeau A."/>
            <person name="Guerreiro P."/>
            <person name="Hani J."/>
            <person name="Hansen M."/>
            <person name="Hebling U."/>
            <person name="Hernandez K."/>
            <person name="Heumann K."/>
            <person name="Hilger F."/>
            <person name="Hofmann B."/>
            <person name="Indge K.J."/>
            <person name="James C.M."/>
            <person name="Klima R."/>
            <person name="Koetter P."/>
            <person name="Kramer B."/>
            <person name="Kramer W."/>
            <person name="Lauquin G."/>
            <person name="Leuther H."/>
            <person name="Louis E.J."/>
            <person name="Maillier E."/>
            <person name="Marconi A."/>
            <person name="Martegani E."/>
            <person name="Mazon M.J."/>
            <person name="Mazzoni C."/>
            <person name="McReynolds A.D.K."/>
            <person name="Melchioretto P."/>
            <person name="Mewes H.-W."/>
            <person name="Minenkova O."/>
            <person name="Mueller-Auer S."/>
            <person name="Nawrocki A."/>
            <person name="Netter P."/>
            <person name="Neu R."/>
            <person name="Nombela C."/>
            <person name="Oliver S.G."/>
            <person name="Panzeri L."/>
            <person name="Paoluzi S."/>
            <person name="Plevani P."/>
            <person name="Portetelle D."/>
            <person name="Portillo F."/>
            <person name="Potier S."/>
            <person name="Purnelle B."/>
            <person name="Rieger M."/>
            <person name="Riles L."/>
            <person name="Rinaldi T."/>
            <person name="Robben J."/>
            <person name="Rodrigues-Pousada C."/>
            <person name="Rodriguez-Belmonte E."/>
            <person name="Rodriguez-Torres A.M."/>
            <person name="Rose M."/>
            <person name="Ruzzi M."/>
            <person name="Saliola M."/>
            <person name="Sanchez-Perez M."/>
            <person name="Schaefer B."/>
            <person name="Schaefer M."/>
            <person name="Scharfe M."/>
            <person name="Schmidheini T."/>
            <person name="Schreer A."/>
            <person name="Skala J."/>
            <person name="Souciet J.-L."/>
            <person name="Steensma H.Y."/>
            <person name="Talla E."/>
            <person name="Thierry A."/>
            <person name="Vandenbol M."/>
            <person name="van der Aart Q.J.M."/>
            <person name="Van Dyck L."/>
            <person name="Vanoni M."/>
            <person name="Verhasselt P."/>
            <person name="Voet M."/>
            <person name="Volckaert G."/>
            <person name="Wambutt R."/>
            <person name="Watson M.D."/>
            <person name="Weber N."/>
            <person name="Wedler E."/>
            <person name="Wedler H."/>
            <person name="Wipfli P."/>
            <person name="Wolf K."/>
            <person name="Wright L.F."/>
            <person name="Zaccaria P."/>
            <person name="Zimmermann M."/>
            <person name="Zollner A."/>
            <person name="Kleine K."/>
        </authorList>
    </citation>
    <scope>NUCLEOTIDE SEQUENCE [LARGE SCALE GENOMIC DNA]</scope>
    <source>
        <strain>ATCC 204508 / S288c</strain>
    </source>
</reference>
<reference key="3">
    <citation type="journal article" date="2014" name="G3 (Bethesda)">
        <title>The reference genome sequence of Saccharomyces cerevisiae: Then and now.</title>
        <authorList>
            <person name="Engel S.R."/>
            <person name="Dietrich F.S."/>
            <person name="Fisk D.G."/>
            <person name="Binkley G."/>
            <person name="Balakrishnan R."/>
            <person name="Costanzo M.C."/>
            <person name="Dwight S.S."/>
            <person name="Hitz B.C."/>
            <person name="Karra K."/>
            <person name="Nash R.S."/>
            <person name="Weng S."/>
            <person name="Wong E.D."/>
            <person name="Lloyd P."/>
            <person name="Skrzypek M.S."/>
            <person name="Miyasato S.R."/>
            <person name="Simison M."/>
            <person name="Cherry J.M."/>
        </authorList>
    </citation>
    <scope>GENOME REANNOTATION</scope>
    <source>
        <strain>ATCC 204508 / S288c</strain>
    </source>
</reference>
<reference key="4">
    <citation type="journal article" date="1994" name="EMBO J.">
        <title>Mating type-specific cell-cell recognition of Saccharomyces cerevisiae: cell wall attachment and active sites of a- and alpha-agglutinin.</title>
        <authorList>
            <person name="Cappellaro C."/>
            <person name="Baldermann C."/>
            <person name="Rachel R."/>
            <person name="Tanner W."/>
        </authorList>
    </citation>
    <scope>SUBUNIT</scope>
    <scope>MUTAGENESIS OF CYS-25 AND CYS-68</scope>
</reference>
<reference key="5">
    <citation type="journal article" date="2001" name="J. Bacteriol.">
        <title>Interaction of alpha-agglutinin and a-agglutinin, Saccharomyces cerevisiae sexual cell adhesion molecules.</title>
        <authorList>
            <person name="Zhao H."/>
            <person name="Shen Z.M."/>
            <person name="Kahn P.C."/>
            <person name="Lipke P.N."/>
        </authorList>
    </citation>
    <scope>INTERACTION WITH SAG1</scope>
</reference>
<reference key="6">
    <citation type="journal article" date="2003" name="Nature">
        <title>Global analysis of protein expression in yeast.</title>
        <authorList>
            <person name="Ghaemmaghami S."/>
            <person name="Huh W.-K."/>
            <person name="Bower K."/>
            <person name="Howson R.W."/>
            <person name="Belle A."/>
            <person name="Dephoure N."/>
            <person name="O'Shea E.K."/>
            <person name="Weissman J.S."/>
        </authorList>
    </citation>
    <scope>LEVEL OF PROTEIN EXPRESSION [LARGE SCALE ANALYSIS]</scope>
</reference>
<proteinExistence type="evidence at protein level"/>
<sequence length="87" mass="9464">MQLLRCFSIFSVIASVLAQELTTICEQIPSPTLESTPYSLSTTTILANGKAMQGVFEYYKSVTFVSNCGSHPSTTSKGSPINTQYVF</sequence>